<reference key="1">
    <citation type="journal article" date="2004" name="Nature">
        <title>Genome evolution in yeasts.</title>
        <authorList>
            <person name="Dujon B."/>
            <person name="Sherman D."/>
            <person name="Fischer G."/>
            <person name="Durrens P."/>
            <person name="Casaregola S."/>
            <person name="Lafontaine I."/>
            <person name="de Montigny J."/>
            <person name="Marck C."/>
            <person name="Neuveglise C."/>
            <person name="Talla E."/>
            <person name="Goffard N."/>
            <person name="Frangeul L."/>
            <person name="Aigle M."/>
            <person name="Anthouard V."/>
            <person name="Babour A."/>
            <person name="Barbe V."/>
            <person name="Barnay S."/>
            <person name="Blanchin S."/>
            <person name="Beckerich J.-M."/>
            <person name="Beyne E."/>
            <person name="Bleykasten C."/>
            <person name="Boisrame A."/>
            <person name="Boyer J."/>
            <person name="Cattolico L."/>
            <person name="Confanioleri F."/>
            <person name="de Daruvar A."/>
            <person name="Despons L."/>
            <person name="Fabre E."/>
            <person name="Fairhead C."/>
            <person name="Ferry-Dumazet H."/>
            <person name="Groppi A."/>
            <person name="Hantraye F."/>
            <person name="Hennequin C."/>
            <person name="Jauniaux N."/>
            <person name="Joyet P."/>
            <person name="Kachouri R."/>
            <person name="Kerrest A."/>
            <person name="Koszul R."/>
            <person name="Lemaire M."/>
            <person name="Lesur I."/>
            <person name="Ma L."/>
            <person name="Muller H."/>
            <person name="Nicaud J.-M."/>
            <person name="Nikolski M."/>
            <person name="Oztas S."/>
            <person name="Ozier-Kalogeropoulos O."/>
            <person name="Pellenz S."/>
            <person name="Potier S."/>
            <person name="Richard G.-F."/>
            <person name="Straub M.-L."/>
            <person name="Suleau A."/>
            <person name="Swennen D."/>
            <person name="Tekaia F."/>
            <person name="Wesolowski-Louvel M."/>
            <person name="Westhof E."/>
            <person name="Wirth B."/>
            <person name="Zeniou-Meyer M."/>
            <person name="Zivanovic Y."/>
            <person name="Bolotin-Fukuhara M."/>
            <person name="Thierry A."/>
            <person name="Bouchier C."/>
            <person name="Caudron B."/>
            <person name="Scarpelli C."/>
            <person name="Gaillardin C."/>
            <person name="Weissenbach J."/>
            <person name="Wincker P."/>
            <person name="Souciet J.-L."/>
        </authorList>
    </citation>
    <scope>NUCLEOTIDE SEQUENCE [LARGE SCALE GENOMIC DNA]</scope>
    <source>
        <strain>CLIB 122 / E 150</strain>
    </source>
</reference>
<feature type="chain" id="PRO_0000410407" description="High osmolarity signaling protein SHO1">
    <location>
        <begin position="1"/>
        <end position="300"/>
    </location>
</feature>
<feature type="topological domain" description="Cytoplasmic" evidence="2">
    <location>
        <begin position="1"/>
        <end position="20"/>
    </location>
</feature>
<feature type="transmembrane region" description="Helical" evidence="2">
    <location>
        <begin position="21"/>
        <end position="41"/>
    </location>
</feature>
<feature type="topological domain" description="Extracellular" evidence="2">
    <location>
        <begin position="42"/>
        <end position="49"/>
    </location>
</feature>
<feature type="transmembrane region" description="Helical" evidence="2">
    <location>
        <begin position="50"/>
        <end position="70"/>
    </location>
</feature>
<feature type="topological domain" description="Cytoplasmic" evidence="2">
    <location>
        <begin position="71"/>
        <end position="79"/>
    </location>
</feature>
<feature type="transmembrane region" description="Helical" evidence="2">
    <location>
        <begin position="80"/>
        <end position="100"/>
    </location>
</feature>
<feature type="topological domain" description="Extracellular" evidence="2">
    <location>
        <begin position="101"/>
        <end position="108"/>
    </location>
</feature>
<feature type="transmembrane region" description="Helical" evidence="2">
    <location>
        <begin position="109"/>
        <end position="129"/>
    </location>
</feature>
<feature type="topological domain" description="Cytoplasmic" evidence="2">
    <location>
        <begin position="130"/>
        <end position="300"/>
    </location>
</feature>
<feature type="domain" description="SH3" evidence="3">
    <location>
        <begin position="240"/>
        <end position="300"/>
    </location>
</feature>
<feature type="region of interest" description="Disordered" evidence="4">
    <location>
        <begin position="202"/>
        <end position="231"/>
    </location>
</feature>
<feature type="compositionally biased region" description="Low complexity" evidence="4">
    <location>
        <begin position="212"/>
        <end position="231"/>
    </location>
</feature>
<feature type="glycosylation site" description="N-linked (GlcNAc...) asparagine" evidence="2">
    <location>
        <position position="102"/>
    </location>
</feature>
<accession>Q6CAC5</accession>
<dbReference type="EMBL" id="CR382130">
    <property type="protein sequence ID" value="CAG80575.1"/>
    <property type="molecule type" value="Genomic_DNA"/>
</dbReference>
<dbReference type="RefSeq" id="XP_502387.1">
    <property type="nucleotide sequence ID" value="XM_502387.1"/>
</dbReference>
<dbReference type="SMR" id="Q6CAC5"/>
<dbReference type="FunCoup" id="Q6CAC5">
    <property type="interactions" value="168"/>
</dbReference>
<dbReference type="STRING" id="284591.Q6CAC5"/>
<dbReference type="GlyCosmos" id="Q6CAC5">
    <property type="glycosylation" value="1 site, No reported glycans"/>
</dbReference>
<dbReference type="EnsemblFungi" id="CAG80575">
    <property type="protein sequence ID" value="CAG80575"/>
    <property type="gene ID" value="YALI0_D04048g"/>
</dbReference>
<dbReference type="KEGG" id="yli:2910598"/>
<dbReference type="VEuPathDB" id="FungiDB:YALI0_D04048g"/>
<dbReference type="HOGENOM" id="CLU_043316_1_0_1"/>
<dbReference type="InParanoid" id="Q6CAC5"/>
<dbReference type="OMA" id="KNGKWWQ"/>
<dbReference type="OrthoDB" id="117039at4891"/>
<dbReference type="Proteomes" id="UP000001300">
    <property type="component" value="Chromosome D"/>
</dbReference>
<dbReference type="GO" id="GO:0030864">
    <property type="term" value="C:cortical actin cytoskeleton"/>
    <property type="evidence" value="ECO:0000318"/>
    <property type="project" value="GO_Central"/>
</dbReference>
<dbReference type="GO" id="GO:0005886">
    <property type="term" value="C:plasma membrane"/>
    <property type="evidence" value="ECO:0007669"/>
    <property type="project" value="UniProtKB-SubCell"/>
</dbReference>
<dbReference type="GO" id="GO:0030427">
    <property type="term" value="C:site of polarized growth"/>
    <property type="evidence" value="ECO:0000318"/>
    <property type="project" value="GO_Central"/>
</dbReference>
<dbReference type="GO" id="GO:0051015">
    <property type="term" value="F:actin filament binding"/>
    <property type="evidence" value="ECO:0000318"/>
    <property type="project" value="GO_Central"/>
</dbReference>
<dbReference type="GO" id="GO:0030833">
    <property type="term" value="P:regulation of actin filament polymerization"/>
    <property type="evidence" value="ECO:0000318"/>
    <property type="project" value="GO_Central"/>
</dbReference>
<dbReference type="CDD" id="cd11855">
    <property type="entry name" value="SH3_Sho1p"/>
    <property type="match status" value="1"/>
</dbReference>
<dbReference type="FunFam" id="2.30.30.40:FF:000213">
    <property type="entry name" value="High osmolarity signaling protein SHO1"/>
    <property type="match status" value="1"/>
</dbReference>
<dbReference type="Gene3D" id="2.30.30.40">
    <property type="entry name" value="SH3 Domains"/>
    <property type="match status" value="1"/>
</dbReference>
<dbReference type="InterPro" id="IPR036028">
    <property type="entry name" value="SH3-like_dom_sf"/>
</dbReference>
<dbReference type="InterPro" id="IPR001452">
    <property type="entry name" value="SH3_domain"/>
</dbReference>
<dbReference type="InterPro" id="IPR035522">
    <property type="entry name" value="Sho1_SH3"/>
</dbReference>
<dbReference type="PANTHER" id="PTHR15735">
    <property type="entry name" value="FCH AND DOUBLE SH3 DOMAINS PROTEIN"/>
    <property type="match status" value="1"/>
</dbReference>
<dbReference type="PANTHER" id="PTHR15735:SF20">
    <property type="entry name" value="HIGH OSMOLARITY SIGNALING PROTEIN SHO1"/>
    <property type="match status" value="1"/>
</dbReference>
<dbReference type="Pfam" id="PF00018">
    <property type="entry name" value="SH3_1"/>
    <property type="match status" value="1"/>
</dbReference>
<dbReference type="PRINTS" id="PR00452">
    <property type="entry name" value="SH3DOMAIN"/>
</dbReference>
<dbReference type="SMART" id="SM00326">
    <property type="entry name" value="SH3"/>
    <property type="match status" value="1"/>
</dbReference>
<dbReference type="SUPFAM" id="SSF50044">
    <property type="entry name" value="SH3-domain"/>
    <property type="match status" value="1"/>
</dbReference>
<dbReference type="PROSITE" id="PS50002">
    <property type="entry name" value="SH3"/>
    <property type="match status" value="1"/>
</dbReference>
<name>SHO1_YARLI</name>
<gene>
    <name type="primary">SHO1</name>
    <name type="ordered locus">YALI0D04048g</name>
</gene>
<evidence type="ECO:0000250" key="1"/>
<evidence type="ECO:0000255" key="2"/>
<evidence type="ECO:0000255" key="3">
    <source>
        <dbReference type="PROSITE-ProRule" id="PRU00192"/>
    </source>
</evidence>
<evidence type="ECO:0000256" key="4">
    <source>
        <dbReference type="SAM" id="MobiDB-lite"/>
    </source>
</evidence>
<evidence type="ECO:0000305" key="5"/>
<comment type="function">
    <text evidence="1">Plasma membrane osmosensor that activates the high osmolarity glycerol (HOG) MAPK signaling pathway in response to high osmolarity.</text>
</comment>
<comment type="subunit">
    <text evidence="1">Forms homooligomers.</text>
</comment>
<comment type="subcellular location">
    <subcellularLocation>
        <location evidence="1">Cell membrane</location>
        <topology evidence="1">Multi-pass membrane protein</topology>
    </subcellularLocation>
</comment>
<comment type="similarity">
    <text evidence="5">Belongs to the SHO1 family.</text>
</comment>
<organism>
    <name type="scientific">Yarrowia lipolytica (strain CLIB 122 / E 150)</name>
    <name type="common">Yeast</name>
    <name type="synonym">Candida lipolytica</name>
    <dbReference type="NCBI Taxonomy" id="284591"/>
    <lineage>
        <taxon>Eukaryota</taxon>
        <taxon>Fungi</taxon>
        <taxon>Dikarya</taxon>
        <taxon>Ascomycota</taxon>
        <taxon>Saccharomycotina</taxon>
        <taxon>Dipodascomycetes</taxon>
        <taxon>Dipodascales</taxon>
        <taxon>Dipodascales incertae sedis</taxon>
        <taxon>Yarrowia</taxon>
    </lineage>
</organism>
<keyword id="KW-1003">Cell membrane</keyword>
<keyword id="KW-0325">Glycoprotein</keyword>
<keyword id="KW-0472">Membrane</keyword>
<keyword id="KW-1185">Reference proteome</keyword>
<keyword id="KW-0728">SH3 domain</keyword>
<keyword id="KW-0346">Stress response</keyword>
<keyword id="KW-0812">Transmembrane</keyword>
<keyword id="KW-1133">Transmembrane helix</keyword>
<sequence>MRQPFSYRPQFQLGLLMGDPFALSTISLGIIGWIIALGGSIGASDQFKNFGWWGLAFEFFVILCVFLVVATDSVEPYRQMLLAFLALATMYVTNSTNNVVYNGTSASSASGAGHILLSIINFLWMIYFGTTHEAGIHAWVDSFAADKGHSYNNDQFAMRRSNPFSLHDQQRQSLGVPGRPVSAYSAGMGGVANYNGLQLGGFENSSNAEPHQASPAFSQQQQQQTATPQQATDSLFVATEYPYRARAVYAYQANPEDANEISFDKGEILDVSDISGRWWQARRDNGEIGICPSNYVELLA</sequence>
<protein>
    <recommendedName>
        <fullName>High osmolarity signaling protein SHO1</fullName>
    </recommendedName>
    <alternativeName>
        <fullName>Osmosensor SHO1</fullName>
    </alternativeName>
</protein>
<proteinExistence type="inferred from homology"/>